<name>RS18_GLUDA</name>
<dbReference type="EMBL" id="CP001189">
    <property type="protein sequence ID" value="ACI52769.1"/>
    <property type="molecule type" value="Genomic_DNA"/>
</dbReference>
<dbReference type="EMBL" id="AM889285">
    <property type="protein sequence ID" value="CAP57275.1"/>
    <property type="molecule type" value="Genomic_DNA"/>
</dbReference>
<dbReference type="RefSeq" id="WP_012227815.1">
    <property type="nucleotide sequence ID" value="NC_010125.1"/>
</dbReference>
<dbReference type="SMR" id="A9H1M6"/>
<dbReference type="STRING" id="272568.GDI3332"/>
<dbReference type="KEGG" id="gdi:GDI3332"/>
<dbReference type="KEGG" id="gdj:Gdia_3039"/>
<dbReference type="eggNOG" id="COG0238">
    <property type="taxonomic scope" value="Bacteria"/>
</dbReference>
<dbReference type="HOGENOM" id="CLU_148710_2_1_5"/>
<dbReference type="OrthoDB" id="9812008at2"/>
<dbReference type="Proteomes" id="UP000001176">
    <property type="component" value="Chromosome"/>
</dbReference>
<dbReference type="GO" id="GO:0022627">
    <property type="term" value="C:cytosolic small ribosomal subunit"/>
    <property type="evidence" value="ECO:0007669"/>
    <property type="project" value="TreeGrafter"/>
</dbReference>
<dbReference type="GO" id="GO:0070181">
    <property type="term" value="F:small ribosomal subunit rRNA binding"/>
    <property type="evidence" value="ECO:0007669"/>
    <property type="project" value="TreeGrafter"/>
</dbReference>
<dbReference type="GO" id="GO:0003735">
    <property type="term" value="F:structural constituent of ribosome"/>
    <property type="evidence" value="ECO:0007669"/>
    <property type="project" value="InterPro"/>
</dbReference>
<dbReference type="GO" id="GO:0006412">
    <property type="term" value="P:translation"/>
    <property type="evidence" value="ECO:0007669"/>
    <property type="project" value="UniProtKB-UniRule"/>
</dbReference>
<dbReference type="Gene3D" id="4.10.640.10">
    <property type="entry name" value="Ribosomal protein S18"/>
    <property type="match status" value="1"/>
</dbReference>
<dbReference type="HAMAP" id="MF_00270">
    <property type="entry name" value="Ribosomal_bS18"/>
    <property type="match status" value="1"/>
</dbReference>
<dbReference type="InterPro" id="IPR001648">
    <property type="entry name" value="Ribosomal_bS18"/>
</dbReference>
<dbReference type="InterPro" id="IPR018275">
    <property type="entry name" value="Ribosomal_bS18_CS"/>
</dbReference>
<dbReference type="InterPro" id="IPR036870">
    <property type="entry name" value="Ribosomal_bS18_sf"/>
</dbReference>
<dbReference type="NCBIfam" id="TIGR00165">
    <property type="entry name" value="S18"/>
    <property type="match status" value="1"/>
</dbReference>
<dbReference type="PANTHER" id="PTHR13479">
    <property type="entry name" value="30S RIBOSOMAL PROTEIN S18"/>
    <property type="match status" value="1"/>
</dbReference>
<dbReference type="PANTHER" id="PTHR13479:SF40">
    <property type="entry name" value="SMALL RIBOSOMAL SUBUNIT PROTEIN BS18M"/>
    <property type="match status" value="1"/>
</dbReference>
<dbReference type="Pfam" id="PF01084">
    <property type="entry name" value="Ribosomal_S18"/>
    <property type="match status" value="1"/>
</dbReference>
<dbReference type="PRINTS" id="PR00974">
    <property type="entry name" value="RIBOSOMALS18"/>
</dbReference>
<dbReference type="SUPFAM" id="SSF46911">
    <property type="entry name" value="Ribosomal protein S18"/>
    <property type="match status" value="1"/>
</dbReference>
<dbReference type="PROSITE" id="PS00057">
    <property type="entry name" value="RIBOSOMAL_S18"/>
    <property type="match status" value="1"/>
</dbReference>
<organism>
    <name type="scientific">Gluconacetobacter diazotrophicus (strain ATCC 49037 / DSM 5601 / CCUG 37298 / CIP 103539 / LMG 7603 / PAl5)</name>
    <dbReference type="NCBI Taxonomy" id="272568"/>
    <lineage>
        <taxon>Bacteria</taxon>
        <taxon>Pseudomonadati</taxon>
        <taxon>Pseudomonadota</taxon>
        <taxon>Alphaproteobacteria</taxon>
        <taxon>Acetobacterales</taxon>
        <taxon>Acetobacteraceae</taxon>
        <taxon>Gluconacetobacter</taxon>
    </lineage>
</organism>
<feature type="chain" id="PRO_1000125805" description="Small ribosomal subunit protein bS18">
    <location>
        <begin position="1"/>
        <end position="91"/>
    </location>
</feature>
<gene>
    <name evidence="1" type="primary">rpsR</name>
    <name type="ordered locus">GDI3332</name>
    <name type="ordered locus">Gdia_3039</name>
</gene>
<evidence type="ECO:0000255" key="1">
    <source>
        <dbReference type="HAMAP-Rule" id="MF_00270"/>
    </source>
</evidence>
<evidence type="ECO:0000305" key="2"/>
<proteinExistence type="inferred from homology"/>
<protein>
    <recommendedName>
        <fullName evidence="1">Small ribosomal subunit protein bS18</fullName>
    </recommendedName>
    <alternativeName>
        <fullName evidence="2">30S ribosomal protein S18</fullName>
    </alternativeName>
</protein>
<keyword id="KW-1185">Reference proteome</keyword>
<keyword id="KW-0687">Ribonucleoprotein</keyword>
<keyword id="KW-0689">Ribosomal protein</keyword>
<keyword id="KW-0694">RNA-binding</keyword>
<keyword id="KW-0699">rRNA-binding</keyword>
<reference key="1">
    <citation type="journal article" date="2009" name="BMC Genomics">
        <title>Complete genome sequence of the sugarcane nitrogen-fixing endophyte Gluconacetobacter diazotrophicus Pal5.</title>
        <authorList>
            <person name="Bertalan M."/>
            <person name="Albano R."/>
            <person name="de Padua V."/>
            <person name="Rouws L."/>
            <person name="Rojas C."/>
            <person name="Hemerly A."/>
            <person name="Teixeira K."/>
            <person name="Schwab S."/>
            <person name="Araujo J."/>
            <person name="Oliveira A."/>
            <person name="Franca L."/>
            <person name="Magalhaes V."/>
            <person name="Alqueres S."/>
            <person name="Cardoso A."/>
            <person name="Almeida W."/>
            <person name="Loureiro M.M."/>
            <person name="Nogueira E."/>
            <person name="Cidade D."/>
            <person name="Oliveira D."/>
            <person name="Simao T."/>
            <person name="Macedo J."/>
            <person name="Valadao A."/>
            <person name="Dreschsel M."/>
            <person name="Freitas F."/>
            <person name="Vidal M."/>
            <person name="Guedes H."/>
            <person name="Rodrigues E."/>
            <person name="Meneses C."/>
            <person name="Brioso P."/>
            <person name="Pozzer L."/>
            <person name="Figueiredo D."/>
            <person name="Montano H."/>
            <person name="Junior J."/>
            <person name="de Souza Filho G."/>
            <person name="Martin Quintana Flores V."/>
            <person name="Ferreira B."/>
            <person name="Branco A."/>
            <person name="Gonzalez P."/>
            <person name="Guillobel H."/>
            <person name="Lemos M."/>
            <person name="Seibel L."/>
            <person name="Macedo J."/>
            <person name="Alves-Ferreira M."/>
            <person name="Sachetto-Martins G."/>
            <person name="Coelho A."/>
            <person name="Santos E."/>
            <person name="Amaral G."/>
            <person name="Neves A."/>
            <person name="Pacheco A.B."/>
            <person name="Carvalho D."/>
            <person name="Lery L."/>
            <person name="Bisch P."/>
            <person name="Rossle S.C."/>
            <person name="Urmenyi T."/>
            <person name="Rael Pereira A."/>
            <person name="Silva R."/>
            <person name="Rondinelli E."/>
            <person name="von Kruger W."/>
            <person name="Martins O."/>
            <person name="Baldani J.I."/>
            <person name="Ferreira P.C."/>
        </authorList>
    </citation>
    <scope>NUCLEOTIDE SEQUENCE [LARGE SCALE GENOMIC DNA]</scope>
    <source>
        <strain>ATCC 49037 / DSM 5601 / CCUG 37298 / CIP 103539 / LMG 7603 / PAl5</strain>
    </source>
</reference>
<reference key="2">
    <citation type="journal article" date="2010" name="Stand. Genomic Sci.">
        <title>Two genome sequences of the same bacterial strain, Gluconacetobacter diazotrophicus PAl 5, suggest a new standard in genome sequence submission.</title>
        <authorList>
            <person name="Giongo A."/>
            <person name="Tyler H.L."/>
            <person name="Zipperer U.N."/>
            <person name="Triplett E.W."/>
        </authorList>
    </citation>
    <scope>NUCLEOTIDE SEQUENCE [LARGE SCALE GENOMIC DNA]</scope>
    <source>
        <strain>ATCC 49037 / DSM 5601 / CCUG 37298 / CIP 103539 / LMG 7603 / PAl5</strain>
    </source>
</reference>
<sequence>MSETTEINPAARRTAVGARRPFYRRRKSCPFSGPNAPKIDYKDVRLLSRFLSERGKIVPSRITAVSAKKQRELAQAIKRARFMALLPYIVG</sequence>
<accession>A9H1M6</accession>
<comment type="function">
    <text evidence="1">Binds as a heterodimer with protein bS6 to the central domain of the 16S rRNA, where it helps stabilize the platform of the 30S subunit.</text>
</comment>
<comment type="subunit">
    <text evidence="1">Part of the 30S ribosomal subunit. Forms a tight heterodimer with protein bS6.</text>
</comment>
<comment type="similarity">
    <text evidence="1">Belongs to the bacterial ribosomal protein bS18 family.</text>
</comment>